<gene>
    <name evidence="1" type="primary">erpA</name>
    <name type="ordered locus">VS_2501</name>
</gene>
<proteinExistence type="inferred from homology"/>
<keyword id="KW-0408">Iron</keyword>
<keyword id="KW-0411">Iron-sulfur</keyword>
<keyword id="KW-0479">Metal-binding</keyword>
<accession>B7VJJ4</accession>
<evidence type="ECO:0000255" key="1">
    <source>
        <dbReference type="HAMAP-Rule" id="MF_01380"/>
    </source>
</evidence>
<dbReference type="EMBL" id="FM954972">
    <property type="protein sequence ID" value="CAV19658.1"/>
    <property type="molecule type" value="Genomic_DNA"/>
</dbReference>
<dbReference type="SMR" id="B7VJJ4"/>
<dbReference type="STRING" id="575788.VS_2501"/>
<dbReference type="KEGG" id="vsp:VS_2501"/>
<dbReference type="eggNOG" id="COG0316">
    <property type="taxonomic scope" value="Bacteria"/>
</dbReference>
<dbReference type="HOGENOM" id="CLU_069054_5_3_6"/>
<dbReference type="Proteomes" id="UP000009100">
    <property type="component" value="Chromosome 1"/>
</dbReference>
<dbReference type="GO" id="GO:0005829">
    <property type="term" value="C:cytosol"/>
    <property type="evidence" value="ECO:0007669"/>
    <property type="project" value="TreeGrafter"/>
</dbReference>
<dbReference type="GO" id="GO:0051537">
    <property type="term" value="F:2 iron, 2 sulfur cluster binding"/>
    <property type="evidence" value="ECO:0007669"/>
    <property type="project" value="TreeGrafter"/>
</dbReference>
<dbReference type="GO" id="GO:0051539">
    <property type="term" value="F:4 iron, 4 sulfur cluster binding"/>
    <property type="evidence" value="ECO:0007669"/>
    <property type="project" value="TreeGrafter"/>
</dbReference>
<dbReference type="GO" id="GO:0005506">
    <property type="term" value="F:iron ion binding"/>
    <property type="evidence" value="ECO:0007669"/>
    <property type="project" value="UniProtKB-UniRule"/>
</dbReference>
<dbReference type="GO" id="GO:0016226">
    <property type="term" value="P:iron-sulfur cluster assembly"/>
    <property type="evidence" value="ECO:0007669"/>
    <property type="project" value="UniProtKB-UniRule"/>
</dbReference>
<dbReference type="FunFam" id="2.60.300.12:FF:000002">
    <property type="entry name" value="Iron-sulfur cluster insertion protein ErpA"/>
    <property type="match status" value="1"/>
</dbReference>
<dbReference type="Gene3D" id="2.60.300.12">
    <property type="entry name" value="HesB-like domain"/>
    <property type="match status" value="1"/>
</dbReference>
<dbReference type="HAMAP" id="MF_01380">
    <property type="entry name" value="Fe_S_insert_ErpA"/>
    <property type="match status" value="1"/>
</dbReference>
<dbReference type="InterPro" id="IPR000361">
    <property type="entry name" value="FeS_biogenesis"/>
</dbReference>
<dbReference type="InterPro" id="IPR016092">
    <property type="entry name" value="FeS_cluster_insertion"/>
</dbReference>
<dbReference type="InterPro" id="IPR017870">
    <property type="entry name" value="FeS_cluster_insertion_CS"/>
</dbReference>
<dbReference type="InterPro" id="IPR023063">
    <property type="entry name" value="FeS_cluster_insertion_RrpA"/>
</dbReference>
<dbReference type="InterPro" id="IPR035903">
    <property type="entry name" value="HesB-like_dom_sf"/>
</dbReference>
<dbReference type="NCBIfam" id="TIGR00049">
    <property type="entry name" value="iron-sulfur cluster assembly accessory protein"/>
    <property type="match status" value="1"/>
</dbReference>
<dbReference type="NCBIfam" id="NF010147">
    <property type="entry name" value="PRK13623.1"/>
    <property type="match status" value="1"/>
</dbReference>
<dbReference type="PANTHER" id="PTHR43011">
    <property type="entry name" value="IRON-SULFUR CLUSTER ASSEMBLY 2 HOMOLOG, MITOCHONDRIAL"/>
    <property type="match status" value="1"/>
</dbReference>
<dbReference type="PANTHER" id="PTHR43011:SF1">
    <property type="entry name" value="IRON-SULFUR CLUSTER ASSEMBLY 2 HOMOLOG, MITOCHONDRIAL"/>
    <property type="match status" value="1"/>
</dbReference>
<dbReference type="Pfam" id="PF01521">
    <property type="entry name" value="Fe-S_biosyn"/>
    <property type="match status" value="1"/>
</dbReference>
<dbReference type="SUPFAM" id="SSF89360">
    <property type="entry name" value="HesB-like domain"/>
    <property type="match status" value="1"/>
</dbReference>
<dbReference type="PROSITE" id="PS01152">
    <property type="entry name" value="HESB"/>
    <property type="match status" value="1"/>
</dbReference>
<sequence>MLFLTQVREVVVSEVNIPLSFSDAAATRVQTLIAEEENPDLKLRVYITGGGCSGFQYGFTFDEKVNDGDTTIVNSGVTLVVDPMSLQYLMGGMVDYTEGLEGARFFVNNPNATTTCGCGASFSV</sequence>
<reference key="1">
    <citation type="submission" date="2009-02" db="EMBL/GenBank/DDBJ databases">
        <title>Vibrio splendidus str. LGP32 complete genome.</title>
        <authorList>
            <person name="Mazel D."/>
            <person name="Le Roux F."/>
        </authorList>
    </citation>
    <scope>NUCLEOTIDE SEQUENCE [LARGE SCALE GENOMIC DNA]</scope>
    <source>
        <strain>LGP32</strain>
    </source>
</reference>
<feature type="chain" id="PRO_1000215097" description="Iron-sulfur cluster insertion protein ErpA">
    <location>
        <begin position="1"/>
        <end position="124"/>
    </location>
</feature>
<feature type="binding site" evidence="1">
    <location>
        <position position="52"/>
    </location>
    <ligand>
        <name>iron-sulfur cluster</name>
        <dbReference type="ChEBI" id="CHEBI:30408"/>
    </ligand>
</feature>
<feature type="binding site" evidence="1">
    <location>
        <position position="116"/>
    </location>
    <ligand>
        <name>iron-sulfur cluster</name>
        <dbReference type="ChEBI" id="CHEBI:30408"/>
    </ligand>
</feature>
<feature type="binding site" evidence="1">
    <location>
        <position position="118"/>
    </location>
    <ligand>
        <name>iron-sulfur cluster</name>
        <dbReference type="ChEBI" id="CHEBI:30408"/>
    </ligand>
</feature>
<protein>
    <recommendedName>
        <fullName evidence="1">Iron-sulfur cluster insertion protein ErpA</fullName>
    </recommendedName>
</protein>
<comment type="function">
    <text evidence="1">Required for insertion of 4Fe-4S clusters for at least IspG.</text>
</comment>
<comment type="cofactor">
    <cofactor evidence="1">
        <name>iron-sulfur cluster</name>
        <dbReference type="ChEBI" id="CHEBI:30408"/>
    </cofactor>
    <text evidence="1">Binds 1 iron-sulfur cluster per subunit.</text>
</comment>
<comment type="subunit">
    <text evidence="1">Homodimer.</text>
</comment>
<comment type="similarity">
    <text evidence="1">Belongs to the HesB/IscA family.</text>
</comment>
<organism>
    <name type="scientific">Vibrio atlanticus (strain LGP32)</name>
    <name type="common">Vibrio splendidus (strain Mel32)</name>
    <dbReference type="NCBI Taxonomy" id="575788"/>
    <lineage>
        <taxon>Bacteria</taxon>
        <taxon>Pseudomonadati</taxon>
        <taxon>Pseudomonadota</taxon>
        <taxon>Gammaproteobacteria</taxon>
        <taxon>Vibrionales</taxon>
        <taxon>Vibrionaceae</taxon>
        <taxon>Vibrio</taxon>
    </lineage>
</organism>
<name>ERPA_VIBA3</name>